<protein>
    <recommendedName>
        <fullName evidence="1">DNA mismatch repair protein MutS</fullName>
    </recommendedName>
</protein>
<feature type="chain" id="PRO_0000335197" description="DNA mismatch repair protein MutS">
    <location>
        <begin position="1"/>
        <end position="913"/>
    </location>
</feature>
<feature type="binding site" evidence="1">
    <location>
        <begin position="720"/>
        <end position="727"/>
    </location>
    <ligand>
        <name>ATP</name>
        <dbReference type="ChEBI" id="CHEBI:30616"/>
    </ligand>
</feature>
<comment type="function">
    <text evidence="1">This protein is involved in the repair of mismatches in DNA. It is possible that it carries out the mismatch recognition step. This protein has a weak ATPase activity.</text>
</comment>
<comment type="similarity">
    <text evidence="1">Belongs to the DNA mismatch repair MutS family.</text>
</comment>
<organism>
    <name type="scientific">Prochlorococcus marinus (strain AS9601)</name>
    <dbReference type="NCBI Taxonomy" id="146891"/>
    <lineage>
        <taxon>Bacteria</taxon>
        <taxon>Bacillati</taxon>
        <taxon>Cyanobacteriota</taxon>
        <taxon>Cyanophyceae</taxon>
        <taxon>Synechococcales</taxon>
        <taxon>Prochlorococcaceae</taxon>
        <taxon>Prochlorococcus</taxon>
    </lineage>
</organism>
<proteinExistence type="inferred from homology"/>
<keyword id="KW-0067">ATP-binding</keyword>
<keyword id="KW-0227">DNA damage</keyword>
<keyword id="KW-0234">DNA repair</keyword>
<keyword id="KW-0238">DNA-binding</keyword>
<keyword id="KW-0547">Nucleotide-binding</keyword>
<dbReference type="EMBL" id="CP000551">
    <property type="protein sequence ID" value="ABM71137.1"/>
    <property type="molecule type" value="Genomic_DNA"/>
</dbReference>
<dbReference type="RefSeq" id="WP_011819255.1">
    <property type="nucleotide sequence ID" value="NC_008816.1"/>
</dbReference>
<dbReference type="SMR" id="A2BTM6"/>
<dbReference type="STRING" id="146891.A9601_18541"/>
<dbReference type="KEGG" id="pmb:A9601_18541"/>
<dbReference type="eggNOG" id="COG0249">
    <property type="taxonomic scope" value="Bacteria"/>
</dbReference>
<dbReference type="HOGENOM" id="CLU_002472_1_3_3"/>
<dbReference type="OrthoDB" id="9802448at2"/>
<dbReference type="Proteomes" id="UP000002590">
    <property type="component" value="Chromosome"/>
</dbReference>
<dbReference type="GO" id="GO:0005829">
    <property type="term" value="C:cytosol"/>
    <property type="evidence" value="ECO:0007669"/>
    <property type="project" value="TreeGrafter"/>
</dbReference>
<dbReference type="GO" id="GO:0005524">
    <property type="term" value="F:ATP binding"/>
    <property type="evidence" value="ECO:0007669"/>
    <property type="project" value="UniProtKB-UniRule"/>
</dbReference>
<dbReference type="GO" id="GO:0140664">
    <property type="term" value="F:ATP-dependent DNA damage sensor activity"/>
    <property type="evidence" value="ECO:0007669"/>
    <property type="project" value="InterPro"/>
</dbReference>
<dbReference type="GO" id="GO:0003684">
    <property type="term" value="F:damaged DNA binding"/>
    <property type="evidence" value="ECO:0007669"/>
    <property type="project" value="UniProtKB-UniRule"/>
</dbReference>
<dbReference type="GO" id="GO:0030983">
    <property type="term" value="F:mismatched DNA binding"/>
    <property type="evidence" value="ECO:0007669"/>
    <property type="project" value="InterPro"/>
</dbReference>
<dbReference type="GO" id="GO:0006298">
    <property type="term" value="P:mismatch repair"/>
    <property type="evidence" value="ECO:0007669"/>
    <property type="project" value="UniProtKB-UniRule"/>
</dbReference>
<dbReference type="CDD" id="cd03284">
    <property type="entry name" value="ABC_MutS1"/>
    <property type="match status" value="1"/>
</dbReference>
<dbReference type="FunFam" id="1.10.1420.10:FF:000001">
    <property type="entry name" value="DNA mismatch repair protein MutS"/>
    <property type="match status" value="1"/>
</dbReference>
<dbReference type="FunFam" id="3.40.50.300:FF:000870">
    <property type="entry name" value="MutS protein homolog 4"/>
    <property type="match status" value="1"/>
</dbReference>
<dbReference type="Gene3D" id="1.10.1420.10">
    <property type="match status" value="2"/>
</dbReference>
<dbReference type="Gene3D" id="3.40.1170.10">
    <property type="entry name" value="DNA repair protein MutS, domain I"/>
    <property type="match status" value="1"/>
</dbReference>
<dbReference type="Gene3D" id="3.30.420.110">
    <property type="entry name" value="MutS, connector domain"/>
    <property type="match status" value="1"/>
</dbReference>
<dbReference type="Gene3D" id="3.40.50.300">
    <property type="entry name" value="P-loop containing nucleotide triphosphate hydrolases"/>
    <property type="match status" value="1"/>
</dbReference>
<dbReference type="HAMAP" id="MF_00096">
    <property type="entry name" value="MutS"/>
    <property type="match status" value="1"/>
</dbReference>
<dbReference type="InterPro" id="IPR005748">
    <property type="entry name" value="DNA_mismatch_repair_MutS"/>
</dbReference>
<dbReference type="InterPro" id="IPR007695">
    <property type="entry name" value="DNA_mismatch_repair_MutS-lik_N"/>
</dbReference>
<dbReference type="InterPro" id="IPR017261">
    <property type="entry name" value="DNA_mismatch_repair_MutS/MSH"/>
</dbReference>
<dbReference type="InterPro" id="IPR000432">
    <property type="entry name" value="DNA_mismatch_repair_MutS_C"/>
</dbReference>
<dbReference type="InterPro" id="IPR007861">
    <property type="entry name" value="DNA_mismatch_repair_MutS_clamp"/>
</dbReference>
<dbReference type="InterPro" id="IPR007696">
    <property type="entry name" value="DNA_mismatch_repair_MutS_core"/>
</dbReference>
<dbReference type="InterPro" id="IPR016151">
    <property type="entry name" value="DNA_mismatch_repair_MutS_N"/>
</dbReference>
<dbReference type="InterPro" id="IPR036187">
    <property type="entry name" value="DNA_mismatch_repair_MutS_sf"/>
</dbReference>
<dbReference type="InterPro" id="IPR007860">
    <property type="entry name" value="DNA_mmatch_repair_MutS_con_dom"/>
</dbReference>
<dbReference type="InterPro" id="IPR045076">
    <property type="entry name" value="MutS"/>
</dbReference>
<dbReference type="InterPro" id="IPR036678">
    <property type="entry name" value="MutS_con_dom_sf"/>
</dbReference>
<dbReference type="InterPro" id="IPR027417">
    <property type="entry name" value="P-loop_NTPase"/>
</dbReference>
<dbReference type="NCBIfam" id="TIGR01070">
    <property type="entry name" value="mutS1"/>
    <property type="match status" value="1"/>
</dbReference>
<dbReference type="NCBIfam" id="NF003810">
    <property type="entry name" value="PRK05399.1"/>
    <property type="match status" value="1"/>
</dbReference>
<dbReference type="PANTHER" id="PTHR11361:SF34">
    <property type="entry name" value="DNA MISMATCH REPAIR PROTEIN MSH1, MITOCHONDRIAL"/>
    <property type="match status" value="1"/>
</dbReference>
<dbReference type="PANTHER" id="PTHR11361">
    <property type="entry name" value="DNA MISMATCH REPAIR PROTEIN MUTS FAMILY MEMBER"/>
    <property type="match status" value="1"/>
</dbReference>
<dbReference type="Pfam" id="PF01624">
    <property type="entry name" value="MutS_I"/>
    <property type="match status" value="1"/>
</dbReference>
<dbReference type="Pfam" id="PF05188">
    <property type="entry name" value="MutS_II"/>
    <property type="match status" value="1"/>
</dbReference>
<dbReference type="Pfam" id="PF05192">
    <property type="entry name" value="MutS_III"/>
    <property type="match status" value="1"/>
</dbReference>
<dbReference type="Pfam" id="PF05190">
    <property type="entry name" value="MutS_IV"/>
    <property type="match status" value="1"/>
</dbReference>
<dbReference type="Pfam" id="PF00488">
    <property type="entry name" value="MutS_V"/>
    <property type="match status" value="1"/>
</dbReference>
<dbReference type="PIRSF" id="PIRSF037677">
    <property type="entry name" value="DNA_mis_repair_Msh6"/>
    <property type="match status" value="1"/>
</dbReference>
<dbReference type="SMART" id="SM00534">
    <property type="entry name" value="MUTSac"/>
    <property type="match status" value="1"/>
</dbReference>
<dbReference type="SMART" id="SM00533">
    <property type="entry name" value="MUTSd"/>
    <property type="match status" value="1"/>
</dbReference>
<dbReference type="SUPFAM" id="SSF55271">
    <property type="entry name" value="DNA repair protein MutS, domain I"/>
    <property type="match status" value="1"/>
</dbReference>
<dbReference type="SUPFAM" id="SSF53150">
    <property type="entry name" value="DNA repair protein MutS, domain II"/>
    <property type="match status" value="1"/>
</dbReference>
<dbReference type="SUPFAM" id="SSF48334">
    <property type="entry name" value="DNA repair protein MutS, domain III"/>
    <property type="match status" value="1"/>
</dbReference>
<dbReference type="SUPFAM" id="SSF52540">
    <property type="entry name" value="P-loop containing nucleoside triphosphate hydrolases"/>
    <property type="match status" value="1"/>
</dbReference>
<dbReference type="PROSITE" id="PS00486">
    <property type="entry name" value="DNA_MISMATCH_REPAIR_2"/>
    <property type="match status" value="1"/>
</dbReference>
<evidence type="ECO:0000255" key="1">
    <source>
        <dbReference type="HAMAP-Rule" id="MF_00096"/>
    </source>
</evidence>
<reference key="1">
    <citation type="journal article" date="2007" name="PLoS Genet.">
        <title>Patterns and implications of gene gain and loss in the evolution of Prochlorococcus.</title>
        <authorList>
            <person name="Kettler G.C."/>
            <person name="Martiny A.C."/>
            <person name="Huang K."/>
            <person name="Zucker J."/>
            <person name="Coleman M.L."/>
            <person name="Rodrigue S."/>
            <person name="Chen F."/>
            <person name="Lapidus A."/>
            <person name="Ferriera S."/>
            <person name="Johnson J."/>
            <person name="Steglich C."/>
            <person name="Church G.M."/>
            <person name="Richardson P."/>
            <person name="Chisholm S.W."/>
        </authorList>
    </citation>
    <scope>NUCLEOTIDE SEQUENCE [LARGE SCALE GENOMIC DNA]</scope>
    <source>
        <strain>AS9601</strain>
    </source>
</reference>
<name>MUTS_PROMS</name>
<sequence>MQEDTIIQKNLFAIGNDINEQKKITKIPENLSLEDLKKESQKRPRQRKNSTNLINKFKTDLISNNKNVCINEESYSYKTVSKLKLTPVMKHYVTLKEENKDRLLLYRLGDFFECFFEDAVLISNLLEITLTSKDAGKEIGKIPMAGVPHHAMERYCADLIKKNYSVVICDQLEKSSGNYGTPIKRGITRIITPGTVIEEGMLIAKKNNWISAIYLSEENSDESYEWGISKADVSTGELITLEGQSLSKLFDEIIKLDSSEIIVGSNTARDLLIKGNSQITYTVSQETNFGINEANYLIKNYFQIANLEGIGLKNLNNATRSLGGLLNYLEKINPSNLDKDSSLKISLDFPQIQYGHNKLIIDYQTQKNLEIKNTQRENNYVGSLLWSIDRTYTCMGARCLRRWIDSPLLNVNEIYKRQNIITNFLESKKLRIDTQNLLRAMGDLERLAGRACAGHASPRDLIAIAEGLKKLPRLKSIIELFKYDLPDWTDQLKNIDEGLLELADTISFKLVENPPLNISEGGMIHDGVDNILDGLRNLMDDYSEWLNKEESKERKISKISNLKIQFHKNFGYYISINKSKVNLAPQHWIKRQTLTNEERYITSEIKNKENKIFQIKSRASSKEYEIFCELRNIVAEKTKQIRSIAKSIASLDALLGLSITSVENNFIKPSLIPINDSMTKNSTKIIAGRNPIVEQLLSDKKFVANDISFEDNQKLIILTGPNASGKSCFIRQLGLIQILTQIGSFVPANNAEIKIADRIFTRIGAVDDQSSGQSTFMVEMSETASILNQATSSSLVLLDEIGRGTSTFDGLSIAWSVSEYLAKKIQCNTIFATHYHELNYLKNTNKNIQNFQVLVEQNNDQLIFSHRIVKGGSNKSYGIEAAKLAGVPKEVIEKAKSVLNSLEENNKLNYDIK</sequence>
<accession>A2BTM6</accession>
<gene>
    <name evidence="1" type="primary">mutS</name>
    <name type="ordered locus">A9601_18541</name>
</gene>